<accession>Q83944</accession>
<proteinExistence type="inferred from homology"/>
<dbReference type="EC" id="2.7.7.48"/>
<dbReference type="EMBL" id="X94347">
    <property type="protein sequence ID" value="CAA64073.1"/>
    <property type="molecule type" value="Genomic_RNA"/>
</dbReference>
<dbReference type="RefSeq" id="NP_620043.1">
    <property type="nucleotide sequence ID" value="NC_003674.1"/>
</dbReference>
<dbReference type="KEGG" id="vg:991142"/>
<dbReference type="Proteomes" id="UP000000412">
    <property type="component" value="Genome"/>
</dbReference>
<dbReference type="GO" id="GO:0000166">
    <property type="term" value="F:nucleotide binding"/>
    <property type="evidence" value="ECO:0007669"/>
    <property type="project" value="UniProtKB-KW"/>
</dbReference>
<dbReference type="GO" id="GO:0003723">
    <property type="term" value="F:RNA binding"/>
    <property type="evidence" value="ECO:0007669"/>
    <property type="project" value="InterPro"/>
</dbReference>
<dbReference type="GO" id="GO:0003968">
    <property type="term" value="F:RNA-directed RNA polymerase activity"/>
    <property type="evidence" value="ECO:0007669"/>
    <property type="project" value="UniProtKB-KW"/>
</dbReference>
<dbReference type="GO" id="GO:0006351">
    <property type="term" value="P:DNA-templated transcription"/>
    <property type="evidence" value="ECO:0007669"/>
    <property type="project" value="InterPro"/>
</dbReference>
<dbReference type="GO" id="GO:0039694">
    <property type="term" value="P:viral RNA genome replication"/>
    <property type="evidence" value="ECO:0007669"/>
    <property type="project" value="InterPro"/>
</dbReference>
<dbReference type="InterPro" id="IPR043502">
    <property type="entry name" value="DNA/RNA_pol_sf"/>
</dbReference>
<dbReference type="InterPro" id="IPR001788">
    <property type="entry name" value="RNA-dep_RNA_pol_alsuvir"/>
</dbReference>
<dbReference type="InterPro" id="IPR007094">
    <property type="entry name" value="RNA-dir_pol_PSvirus"/>
</dbReference>
<dbReference type="Pfam" id="PF00978">
    <property type="entry name" value="RdRP_2"/>
    <property type="match status" value="1"/>
</dbReference>
<dbReference type="SUPFAM" id="SSF56672">
    <property type="entry name" value="DNA/RNA polymerases"/>
    <property type="match status" value="1"/>
</dbReference>
<dbReference type="PROSITE" id="PS50507">
    <property type="entry name" value="RDRP_SSRNA_POS"/>
    <property type="match status" value="1"/>
</dbReference>
<keyword id="KW-0547">Nucleotide-binding</keyword>
<keyword id="KW-0548">Nucleotidyltransferase</keyword>
<keyword id="KW-1185">Reference proteome</keyword>
<keyword id="KW-0696">RNA-directed RNA polymerase</keyword>
<keyword id="KW-0808">Transferase</keyword>
<keyword id="KW-0693">Viral RNA replication</keyword>
<evidence type="ECO:0000250" key="1"/>
<evidence type="ECO:0000255" key="2">
    <source>
        <dbReference type="PROSITE-ProRule" id="PRU00539"/>
    </source>
</evidence>
<evidence type="ECO:0000305" key="3"/>
<name>RDRP_OLV2I</name>
<feature type="chain" id="PRO_0000402416" description="RNA-directed RNA polymerase 2a">
    <location>
        <begin position="1"/>
        <end position="787"/>
    </location>
</feature>
<feature type="domain" description="RdRp catalytic" evidence="2">
    <location>
        <begin position="505"/>
        <end position="619"/>
    </location>
</feature>
<organism>
    <name type="scientific">Olive latent virus 2 (isolate Italy)</name>
    <name type="common">OLV-2</name>
    <dbReference type="NCBI Taxonomy" id="650489"/>
    <lineage>
        <taxon>Viruses</taxon>
        <taxon>Riboviria</taxon>
        <taxon>Orthornavirae</taxon>
        <taxon>Kitrinoviricota</taxon>
        <taxon>Alsuviricetes</taxon>
        <taxon>Martellivirales</taxon>
        <taxon>Bromoviridae</taxon>
        <taxon>Oleavirus</taxon>
        <taxon>Olive latent virus 2</taxon>
    </lineage>
</organism>
<organismHost>
    <name type="scientific">Olea</name>
    <dbReference type="NCBI Taxonomy" id="4145"/>
</organismHost>
<reference key="1">
    <citation type="journal article" date="1996" name="J. Gen. Virol.">
        <title>The nucleotide sequence of RNA1 and RNA2 of olive latent virus 2 and its relationships in the family Bromoviridae.</title>
        <authorList>
            <person name="Grieco F."/>
            <person name="Dell'Orco M."/>
            <person name="Martelli G.P."/>
        </authorList>
    </citation>
    <scope>NUCLEOTIDE SEQUENCE [GENOMIC RNA]</scope>
</reference>
<reference key="2">
    <citation type="submission" date="1999-02" db="EMBL/GenBank/DDBJ databases">
        <authorList>
            <person name="Grieco F."/>
        </authorList>
    </citation>
    <scope>SEQUENCE REVISION</scope>
</reference>
<sequence>MAGVLYDEEYVPQEPDYLYCPYEWEGEDPTQCDANVPSVSYLVEAVKKSFTEGNHDMLISCESYHAECCEGPLMNKGLTLSTYFMSYPGISLPAFGGGVIHVTSARVCMQAFYAVTPGRCSCSCGTQFIYRAKGGTGLTFDATNTISSAFKFEDGKVKWLTEDLGLALLAGCFLKYVPIPHEIEIKIERKVEPVSALDFWEPEGLISDVHFVHPQERALAPEPPMDVEMVRLVRTELFEHFNPTLLLNARSDFSGEKLKEVELPRAQSEPLVPRVCLPRGDDALIDQFFIDKAPEHFNREPATDQWQVESDDFTVDFPTQVRLRERDEDWFRRKPDFAVSSIRTGLEMPRIATKKEMLMAFSKRNVGAPQMVEVPQEIHVKRLADRFFRTFLKEGGWDKGDGHYWDDFFHRKGRKVFSLENCYDDPLSSYLVMLKSAGKFSLDLNFPVRSVPQTITYHEKWVTEVFSPMFLQVMARFFSRLQDWVVVPAGPMADFSRVWPSFEGKCLTEIDLSKFDKSQGKLLHDVQREIFLRLGFPPIWCDWWFKFHESSYLNDKNLGIAFSVDYQRRTGNTATYFGNTLVTMIMMAEVYELDSLPFCGLFSGDDNLIVTDRPLEGRVSLFPNMFNMEAKVMRPGQNYMCSKYLCTVDGRVTPVPDPFKLLKKAGASCPLEHLDDFYESFLDYTKYLVRDEVRTLIPRLMAHRYQVSMDEAGVALDQIMSWRKSKTQFFKHFQYRKPIKDSLEAVKSDFLSAFGKVDDRIRVWRGRRTNHKKEVDALKVPLVSFRE</sequence>
<comment type="function">
    <text evidence="3">RNA-dependent RNA polymerase which replicates the viral genome composed of 3 RNA segments, RNA1, RNA2 and RNA3.</text>
</comment>
<comment type="catalytic activity">
    <reaction evidence="2">
        <text>RNA(n) + a ribonucleoside 5'-triphosphate = RNA(n+1) + diphosphate</text>
        <dbReference type="Rhea" id="RHEA:21248"/>
        <dbReference type="Rhea" id="RHEA-COMP:14527"/>
        <dbReference type="Rhea" id="RHEA-COMP:17342"/>
        <dbReference type="ChEBI" id="CHEBI:33019"/>
        <dbReference type="ChEBI" id="CHEBI:61557"/>
        <dbReference type="ChEBI" id="CHEBI:140395"/>
        <dbReference type="EC" id="2.7.7.48"/>
    </reaction>
</comment>
<comment type="subunit">
    <text evidence="1">Interacts with replication protein 1a.</text>
</comment>
<comment type="similarity">
    <text evidence="3">Belongs to the ssRNA positive-strand viruses RNA-directed RNA polymerase family.</text>
</comment>
<gene>
    <name type="ORF">ORF2a</name>
</gene>
<protein>
    <recommendedName>
        <fullName>RNA-directed RNA polymerase 2a</fullName>
        <shortName>protein 2a</shortName>
        <ecNumber>2.7.7.48</ecNumber>
    </recommendedName>
</protein>